<sequence length="949" mass="104967">MKTDLLASRHIGINEEDTAVMLRKIGVDSLDELINKTIPANIRLKEPLALAKPLTEYEFGKHIADLASKNKLYTTYIGLGWYNTITPAVIQRNVFENPVWYTSYTPYQTEVSQGRLEALMNFQTAVCDLTAMPLANCSLLDEATAAAEAVTMMYALRSRTQQKAGANVVFVDENIFPQTLAVMTTRAIPQGIELRVGKYKEFEPSPEIFACILQYPNSSGNVEDYADFTKKAHEADCKVAVAADILSLALLTPPGEWGADIVFGTTQRLGTPMFYGGPSAGYFATRDEYKRNMPGRIIGWSKDKYGKLCYRMALQTREQHIKREKATSNICTAQALLATMAGFYAVYHGQEGIKTIASRIHSITVFLDKQLKKFGYTQVNAQYFDTLRFELPEHVSAQQIRTIALSKEVNLRYYENGDVGFSIDETTDIAATNVLLSIFAIAAGKDYQKVEDVPEKSNIDKALKRTTPFLTHEVFSNYHTETEMMRYIKRLDRKDISLAQSMISLGSCTMKLNAAAEMLPLSRPEFMSMHPLVPEDQAEGYRELISNLSEDLKVITGFAGVSLQPNSGAAGEYAGLRVIRAYLESIGQGHRNKILIPASAHGTNPASAIQAGFETVTCACDEQGNVDMGDLRAKAEENKEALAALMITYPSTHGIFETEIKEICEIIHACGAQVYMDGANMNAQVGLTNPGFIGADVCHLNLHKTFASPHGGGGPGVGPICVAEHLVPFLPGHSIFGSTQNQVSAAPFGSAGILPITYGYIRMMGTEGLTQATKIAILNANYLAACLKDTYGIVYRGATGFVGHEMILECRKVHEETGISENDIAKRLMDYGYHAPTLSFPVHGTLMIEPTESESLAELDNFVDVMLNIWKEIQEVKNEEADKNDNVLINAPHPEYEIVNDNWEHSYTREKAAYPIESVRENKFWVNVARVDNTLGDRKLLPTRYGTFE</sequence>
<reference key="1">
    <citation type="journal article" date="2003" name="Science">
        <title>A genomic view of the human-Bacteroides thetaiotaomicron symbiosis.</title>
        <authorList>
            <person name="Xu J."/>
            <person name="Bjursell M.K."/>
            <person name="Himrod J."/>
            <person name="Deng S."/>
            <person name="Carmichael L.K."/>
            <person name="Chiang H.C."/>
            <person name="Hooper L.V."/>
            <person name="Gordon J.I."/>
        </authorList>
    </citation>
    <scope>NUCLEOTIDE SEQUENCE [LARGE SCALE GENOMIC DNA]</scope>
    <source>
        <strain>ATCC 29148 / DSM 2079 / JCM 5827 / CCUG 10774 / NCTC 10582 / VPI-5482 / E50</strain>
    </source>
</reference>
<protein>
    <recommendedName>
        <fullName evidence="1">Glycine dehydrogenase (decarboxylating)</fullName>
        <ecNumber evidence="1">1.4.4.2</ecNumber>
    </recommendedName>
    <alternativeName>
        <fullName evidence="1">Glycine cleavage system P-protein</fullName>
    </alternativeName>
    <alternativeName>
        <fullName evidence="1">Glycine decarboxylase</fullName>
    </alternativeName>
    <alternativeName>
        <fullName evidence="1">Glycine dehydrogenase (aminomethyl-transferring)</fullName>
    </alternativeName>
</protein>
<organism>
    <name type="scientific">Bacteroides thetaiotaomicron (strain ATCC 29148 / DSM 2079 / JCM 5827 / CCUG 10774 / NCTC 10582 / VPI-5482 / E50)</name>
    <dbReference type="NCBI Taxonomy" id="226186"/>
    <lineage>
        <taxon>Bacteria</taxon>
        <taxon>Pseudomonadati</taxon>
        <taxon>Bacteroidota</taxon>
        <taxon>Bacteroidia</taxon>
        <taxon>Bacteroidales</taxon>
        <taxon>Bacteroidaceae</taxon>
        <taxon>Bacteroides</taxon>
    </lineage>
</organism>
<feature type="chain" id="PRO_0000166903" description="Glycine dehydrogenase (decarboxylating)">
    <location>
        <begin position="1"/>
        <end position="949"/>
    </location>
</feature>
<feature type="modified residue" description="N6-(pyridoxal phosphate)lysine" evidence="1">
    <location>
        <position position="704"/>
    </location>
</feature>
<evidence type="ECO:0000255" key="1">
    <source>
        <dbReference type="HAMAP-Rule" id="MF_00711"/>
    </source>
</evidence>
<dbReference type="EC" id="1.4.4.2" evidence="1"/>
<dbReference type="EMBL" id="AE015928">
    <property type="protein sequence ID" value="AAO76254.1"/>
    <property type="molecule type" value="Genomic_DNA"/>
</dbReference>
<dbReference type="RefSeq" id="NP_810060.1">
    <property type="nucleotide sequence ID" value="NC_004663.1"/>
</dbReference>
<dbReference type="RefSeq" id="WP_008765866.1">
    <property type="nucleotide sequence ID" value="NC_004663.1"/>
</dbReference>
<dbReference type="SMR" id="Q8A8M0"/>
<dbReference type="FunCoup" id="Q8A8M0">
    <property type="interactions" value="447"/>
</dbReference>
<dbReference type="STRING" id="226186.BT_1147"/>
<dbReference type="PaxDb" id="226186-BT_1147"/>
<dbReference type="EnsemblBacteria" id="AAO76254">
    <property type="protein sequence ID" value="AAO76254"/>
    <property type="gene ID" value="BT_1147"/>
</dbReference>
<dbReference type="GeneID" id="60927124"/>
<dbReference type="KEGG" id="bth:BT_1147"/>
<dbReference type="PATRIC" id="fig|226186.12.peg.1169"/>
<dbReference type="eggNOG" id="COG0403">
    <property type="taxonomic scope" value="Bacteria"/>
</dbReference>
<dbReference type="eggNOG" id="COG1003">
    <property type="taxonomic scope" value="Bacteria"/>
</dbReference>
<dbReference type="HOGENOM" id="CLU_004620_3_2_10"/>
<dbReference type="InParanoid" id="Q8A8M0"/>
<dbReference type="OrthoDB" id="9801272at2"/>
<dbReference type="Proteomes" id="UP000001414">
    <property type="component" value="Chromosome"/>
</dbReference>
<dbReference type="GO" id="GO:0005829">
    <property type="term" value="C:cytosol"/>
    <property type="evidence" value="ECO:0000318"/>
    <property type="project" value="GO_Central"/>
</dbReference>
<dbReference type="GO" id="GO:0005960">
    <property type="term" value="C:glycine cleavage complex"/>
    <property type="evidence" value="ECO:0000318"/>
    <property type="project" value="GO_Central"/>
</dbReference>
<dbReference type="GO" id="GO:0016594">
    <property type="term" value="F:glycine binding"/>
    <property type="evidence" value="ECO:0000318"/>
    <property type="project" value="GO_Central"/>
</dbReference>
<dbReference type="GO" id="GO:0004375">
    <property type="term" value="F:glycine dehydrogenase (decarboxylating) activity"/>
    <property type="evidence" value="ECO:0000318"/>
    <property type="project" value="GO_Central"/>
</dbReference>
<dbReference type="GO" id="GO:0030170">
    <property type="term" value="F:pyridoxal phosphate binding"/>
    <property type="evidence" value="ECO:0000318"/>
    <property type="project" value="GO_Central"/>
</dbReference>
<dbReference type="GO" id="GO:0019464">
    <property type="term" value="P:glycine decarboxylation via glycine cleavage system"/>
    <property type="evidence" value="ECO:0000318"/>
    <property type="project" value="GO_Central"/>
</dbReference>
<dbReference type="CDD" id="cd00613">
    <property type="entry name" value="GDC-P"/>
    <property type="match status" value="2"/>
</dbReference>
<dbReference type="FunFam" id="3.40.640.10:FF:000197">
    <property type="entry name" value="Glycine dehydrogenase (decarboxylating)"/>
    <property type="match status" value="1"/>
</dbReference>
<dbReference type="FunFam" id="3.40.640.10:FF:000007">
    <property type="entry name" value="glycine dehydrogenase (Decarboxylating), mitochondrial"/>
    <property type="match status" value="1"/>
</dbReference>
<dbReference type="Gene3D" id="3.90.1150.10">
    <property type="entry name" value="Aspartate Aminotransferase, domain 1"/>
    <property type="match status" value="2"/>
</dbReference>
<dbReference type="Gene3D" id="3.40.640.10">
    <property type="entry name" value="Type I PLP-dependent aspartate aminotransferase-like (Major domain)"/>
    <property type="match status" value="2"/>
</dbReference>
<dbReference type="HAMAP" id="MF_00711">
    <property type="entry name" value="GcvP"/>
    <property type="match status" value="1"/>
</dbReference>
<dbReference type="InterPro" id="IPR003437">
    <property type="entry name" value="GcvP"/>
</dbReference>
<dbReference type="InterPro" id="IPR049316">
    <property type="entry name" value="GDC-P_C"/>
</dbReference>
<dbReference type="InterPro" id="IPR049315">
    <property type="entry name" value="GDC-P_N"/>
</dbReference>
<dbReference type="InterPro" id="IPR020581">
    <property type="entry name" value="GDC_P"/>
</dbReference>
<dbReference type="InterPro" id="IPR015424">
    <property type="entry name" value="PyrdxlP-dep_Trfase"/>
</dbReference>
<dbReference type="InterPro" id="IPR015421">
    <property type="entry name" value="PyrdxlP-dep_Trfase_major"/>
</dbReference>
<dbReference type="InterPro" id="IPR015422">
    <property type="entry name" value="PyrdxlP-dep_Trfase_small"/>
</dbReference>
<dbReference type="NCBIfam" id="TIGR00461">
    <property type="entry name" value="gcvP"/>
    <property type="match status" value="1"/>
</dbReference>
<dbReference type="NCBIfam" id="NF003346">
    <property type="entry name" value="PRK04366.1"/>
    <property type="match status" value="1"/>
</dbReference>
<dbReference type="PANTHER" id="PTHR11773:SF1">
    <property type="entry name" value="GLYCINE DEHYDROGENASE (DECARBOXYLATING), MITOCHONDRIAL"/>
    <property type="match status" value="1"/>
</dbReference>
<dbReference type="PANTHER" id="PTHR11773">
    <property type="entry name" value="GLYCINE DEHYDROGENASE, DECARBOXYLATING"/>
    <property type="match status" value="1"/>
</dbReference>
<dbReference type="Pfam" id="PF21478">
    <property type="entry name" value="GcvP2_C"/>
    <property type="match status" value="1"/>
</dbReference>
<dbReference type="Pfam" id="PF02347">
    <property type="entry name" value="GDC-P"/>
    <property type="match status" value="2"/>
</dbReference>
<dbReference type="SUPFAM" id="SSF53383">
    <property type="entry name" value="PLP-dependent transferases"/>
    <property type="match status" value="2"/>
</dbReference>
<proteinExistence type="inferred from homology"/>
<gene>
    <name evidence="1" type="primary">gcvP</name>
    <name type="ordered locus">BT_1147</name>
</gene>
<accession>Q8A8M0</accession>
<comment type="function">
    <text evidence="1">The glycine cleavage system catalyzes the degradation of glycine. The P protein binds the alpha-amino group of glycine through its pyridoxal phosphate cofactor; CO(2) is released and the remaining methylamine moiety is then transferred to the lipoamide cofactor of the H protein.</text>
</comment>
<comment type="catalytic activity">
    <reaction evidence="1">
        <text>N(6)-[(R)-lipoyl]-L-lysyl-[glycine-cleavage complex H protein] + glycine + H(+) = N(6)-[(R)-S(8)-aminomethyldihydrolipoyl]-L-lysyl-[glycine-cleavage complex H protein] + CO2</text>
        <dbReference type="Rhea" id="RHEA:24304"/>
        <dbReference type="Rhea" id="RHEA-COMP:10494"/>
        <dbReference type="Rhea" id="RHEA-COMP:10495"/>
        <dbReference type="ChEBI" id="CHEBI:15378"/>
        <dbReference type="ChEBI" id="CHEBI:16526"/>
        <dbReference type="ChEBI" id="CHEBI:57305"/>
        <dbReference type="ChEBI" id="CHEBI:83099"/>
        <dbReference type="ChEBI" id="CHEBI:83143"/>
        <dbReference type="EC" id="1.4.4.2"/>
    </reaction>
</comment>
<comment type="cofactor">
    <cofactor evidence="1">
        <name>pyridoxal 5'-phosphate</name>
        <dbReference type="ChEBI" id="CHEBI:597326"/>
    </cofactor>
</comment>
<comment type="subunit">
    <text evidence="1">The glycine cleavage system is composed of four proteins: P, T, L and H.</text>
</comment>
<comment type="similarity">
    <text evidence="1">Belongs to the GcvP family.</text>
</comment>
<keyword id="KW-0560">Oxidoreductase</keyword>
<keyword id="KW-0663">Pyridoxal phosphate</keyword>
<keyword id="KW-1185">Reference proteome</keyword>
<name>GCSP_BACTN</name>